<dbReference type="EMBL" id="Z34098">
    <property type="protein sequence ID" value="CAA83989.1"/>
    <property type="molecule type" value="Genomic_DNA"/>
</dbReference>
<dbReference type="EMBL" id="Z49496">
    <property type="protein sequence ID" value="CAA89518.1"/>
    <property type="molecule type" value="Genomic_DNA"/>
</dbReference>
<dbReference type="PIR" id="S50706">
    <property type="entry name" value="S50706"/>
</dbReference>
<dbReference type="EnsemblFungi" id="YIL171W-A_mRNA">
    <property type="protein sequence ID" value="YIL171W-A"/>
    <property type="gene ID" value="YIL171W-A"/>
</dbReference>
<dbReference type="EnsemblFungi" id="YJL220W_mRNA">
    <property type="protein sequence ID" value="YJL220W"/>
    <property type="gene ID" value="YJL220W"/>
</dbReference>
<dbReference type="AGR" id="SGD:S000003756"/>
<dbReference type="SGD" id="S000003756">
    <property type="gene designation" value="YJL220W"/>
</dbReference>
<dbReference type="GeneTree" id="ENSGT00940000181579"/>
<dbReference type="HOGENOM" id="CLU_1662181_0_0_1"/>
<dbReference type="OMA" id="HTELMCL"/>
<feature type="chain" id="PRO_0000203010" description="Putative uncharacterized protein YJL220W">
    <location>
        <begin position="1"/>
        <end position="150"/>
    </location>
</feature>
<proteinExistence type="uncertain"/>
<gene>
    <name type="ordered locus">YJL220W</name>
    <name type="ORF">HRC150</name>
    <name type="ORF">J0220</name>
</gene>
<name>YJW0_YEAST</name>
<sequence>MCLFDQGKAVLVRTVGWPDLFVVGNIVTHIILWRVVKWRDPNGIGTKLFDVLQLGGNTLHITPTIVVGVFETCGINLINCGLFPPLGFCFWMCRRNSHCTLLSYLYEKTFTFVCVFGLVNGTYILVQLIPRVKKSSLLIYVCGRLTNDRK</sequence>
<organism>
    <name type="scientific">Saccharomyces cerevisiae (strain ATCC 204508 / S288c)</name>
    <name type="common">Baker's yeast</name>
    <dbReference type="NCBI Taxonomy" id="559292"/>
    <lineage>
        <taxon>Eukaryota</taxon>
        <taxon>Fungi</taxon>
        <taxon>Dikarya</taxon>
        <taxon>Ascomycota</taxon>
        <taxon>Saccharomycotina</taxon>
        <taxon>Saccharomycetes</taxon>
        <taxon>Saccharomycetales</taxon>
        <taxon>Saccharomycetaceae</taxon>
        <taxon>Saccharomyces</taxon>
    </lineage>
</organism>
<reference key="1">
    <citation type="journal article" date="1994" name="Yeast">
        <title>Sequence analysis of a 40.2 kb DNA fragment located near the left telomere of yeast chromosome X.</title>
        <authorList>
            <person name="Vandenbol M."/>
            <person name="Durand P."/>
            <person name="Bolle P.-A."/>
            <person name="Dion C."/>
            <person name="Portetelle D."/>
            <person name="Hilger F."/>
        </authorList>
    </citation>
    <scope>NUCLEOTIDE SEQUENCE [GENOMIC DNA]</scope>
    <source>
        <strain>ATCC 204508 / S288c</strain>
    </source>
</reference>
<reference key="2">
    <citation type="journal article" date="1996" name="EMBO J.">
        <title>Complete nucleotide sequence of Saccharomyces cerevisiae chromosome X.</title>
        <authorList>
            <person name="Galibert F."/>
            <person name="Alexandraki D."/>
            <person name="Baur A."/>
            <person name="Boles E."/>
            <person name="Chalwatzis N."/>
            <person name="Chuat J.-C."/>
            <person name="Coster F."/>
            <person name="Cziepluch C."/>
            <person name="de Haan M."/>
            <person name="Domdey H."/>
            <person name="Durand P."/>
            <person name="Entian K.-D."/>
            <person name="Gatius M."/>
            <person name="Goffeau A."/>
            <person name="Grivell L.A."/>
            <person name="Hennemann A."/>
            <person name="Herbert C.J."/>
            <person name="Heumann K."/>
            <person name="Hilger F."/>
            <person name="Hollenberg C.P."/>
            <person name="Huang M.-E."/>
            <person name="Jacq C."/>
            <person name="Jauniaux J.-C."/>
            <person name="Katsoulou C."/>
            <person name="Kirchrath L."/>
            <person name="Kleine K."/>
            <person name="Kordes E."/>
            <person name="Koetter P."/>
            <person name="Liebl S."/>
            <person name="Louis E.J."/>
            <person name="Manus V."/>
            <person name="Mewes H.-W."/>
            <person name="Miosga T."/>
            <person name="Obermaier B."/>
            <person name="Perea J."/>
            <person name="Pohl T.M."/>
            <person name="Portetelle D."/>
            <person name="Pujol A."/>
            <person name="Purnelle B."/>
            <person name="Ramezani Rad M."/>
            <person name="Rasmussen S.W."/>
            <person name="Rose M."/>
            <person name="Rossau R."/>
            <person name="Schaaff-Gerstenschlaeger I."/>
            <person name="Smits P.H.M."/>
            <person name="Scarcez T."/>
            <person name="Soriano N."/>
            <person name="To Van D."/>
            <person name="Tzermia M."/>
            <person name="Van Broekhoven A."/>
            <person name="Vandenbol M."/>
            <person name="Wedler H."/>
            <person name="von Wettstein D."/>
            <person name="Wambutt R."/>
            <person name="Zagulski M."/>
            <person name="Zollner A."/>
            <person name="Karpfinger-Hartl L."/>
        </authorList>
    </citation>
    <scope>NUCLEOTIDE SEQUENCE [LARGE SCALE GENOMIC DNA]</scope>
    <source>
        <strain>ATCC 204508 / S288c</strain>
    </source>
</reference>
<reference key="3">
    <citation type="journal article" date="2014" name="G3 (Bethesda)">
        <title>The reference genome sequence of Saccharomyces cerevisiae: Then and now.</title>
        <authorList>
            <person name="Engel S.R."/>
            <person name="Dietrich F.S."/>
            <person name="Fisk D.G."/>
            <person name="Binkley G."/>
            <person name="Balakrishnan R."/>
            <person name="Costanzo M.C."/>
            <person name="Dwight S.S."/>
            <person name="Hitz B.C."/>
            <person name="Karra K."/>
            <person name="Nash R.S."/>
            <person name="Weng S."/>
            <person name="Wong E.D."/>
            <person name="Lloyd P."/>
            <person name="Skrzypek M.S."/>
            <person name="Miyasato S.R."/>
            <person name="Simison M."/>
            <person name="Cherry J.M."/>
        </authorList>
    </citation>
    <scope>GENOME REANNOTATION</scope>
    <source>
        <strain>ATCC 204508 / S288c</strain>
    </source>
</reference>
<comment type="miscellaneous">
    <text evidence="1">Partially overlaps FSP2.</text>
</comment>
<comment type="caution">
    <text evidence="2">Product of a dubious gene prediction unlikely to encode a functional protein. Because of that it is not part of the S.cerevisiae S288c complete/reference proteome set.</text>
</comment>
<protein>
    <recommendedName>
        <fullName>Putative uncharacterized protein YJL220W</fullName>
    </recommendedName>
</protein>
<accession>P40891</accession>
<evidence type="ECO:0000305" key="1"/>
<evidence type="ECO:0000305" key="2">
    <source>
    </source>
</evidence>